<reference key="1">
    <citation type="journal article" date="2004" name="J. Bacteriol.">
        <title>Complete genome sequence of the genetically tractable hydrogenotrophic methanogen Methanococcus maripaludis.</title>
        <authorList>
            <person name="Hendrickson E.L."/>
            <person name="Kaul R."/>
            <person name="Zhou Y."/>
            <person name="Bovee D."/>
            <person name="Chapman P."/>
            <person name="Chung J."/>
            <person name="Conway de Macario E."/>
            <person name="Dodsworth J.A."/>
            <person name="Gillett W."/>
            <person name="Graham D.E."/>
            <person name="Hackett M."/>
            <person name="Haydock A.K."/>
            <person name="Kang A."/>
            <person name="Land M.L."/>
            <person name="Levy R."/>
            <person name="Lie T.J."/>
            <person name="Major T.A."/>
            <person name="Moore B.C."/>
            <person name="Porat I."/>
            <person name="Palmeiri A."/>
            <person name="Rouse G."/>
            <person name="Saenphimmachak C."/>
            <person name="Soell D."/>
            <person name="Van Dien S."/>
            <person name="Wang T."/>
            <person name="Whitman W.B."/>
            <person name="Xia Q."/>
            <person name="Zhang Y."/>
            <person name="Larimer F.W."/>
            <person name="Olson M.V."/>
            <person name="Leigh J.A."/>
        </authorList>
    </citation>
    <scope>NUCLEOTIDE SEQUENCE [LARGE SCALE GENOMIC DNA]</scope>
    <source>
        <strain>DSM 14266 / JCM 13030 / NBRC 101832 / S2 / LL</strain>
    </source>
</reference>
<protein>
    <recommendedName>
        <fullName evidence="1">Adenylosuccinate synthetase</fullName>
        <shortName evidence="1">AMPSase</shortName>
        <shortName evidence="1">AdSS</shortName>
        <ecNumber evidence="1">6.3.4.4</ecNumber>
    </recommendedName>
    <alternativeName>
        <fullName evidence="1">IMP--aspartate ligase</fullName>
    </alternativeName>
</protein>
<organism>
    <name type="scientific">Methanococcus maripaludis (strain DSM 14266 / JCM 13030 / NBRC 101832 / S2 / LL)</name>
    <dbReference type="NCBI Taxonomy" id="267377"/>
    <lineage>
        <taxon>Archaea</taxon>
        <taxon>Methanobacteriati</taxon>
        <taxon>Methanobacteriota</taxon>
        <taxon>Methanomada group</taxon>
        <taxon>Methanococci</taxon>
        <taxon>Methanococcales</taxon>
        <taxon>Methanococcaceae</taxon>
        <taxon>Methanococcus</taxon>
    </lineage>
</organism>
<gene>
    <name evidence="1" type="primary">purA</name>
    <name type="ordered locus">MMP1432</name>
</gene>
<dbReference type="EC" id="6.3.4.4" evidence="1"/>
<dbReference type="EMBL" id="BX950229">
    <property type="protein sequence ID" value="CAF30988.1"/>
    <property type="molecule type" value="Genomic_DNA"/>
</dbReference>
<dbReference type="RefSeq" id="WP_011171376.1">
    <property type="nucleotide sequence ID" value="NC_005791.1"/>
</dbReference>
<dbReference type="SMR" id="Q6LXC0"/>
<dbReference type="STRING" id="267377.MMP1432"/>
<dbReference type="EnsemblBacteria" id="CAF30988">
    <property type="protein sequence ID" value="CAF30988"/>
    <property type="gene ID" value="MMP1432"/>
</dbReference>
<dbReference type="GeneID" id="2762460"/>
<dbReference type="KEGG" id="mmp:MMP1432"/>
<dbReference type="PATRIC" id="fig|267377.15.peg.1468"/>
<dbReference type="eggNOG" id="arCOG04387">
    <property type="taxonomic scope" value="Archaea"/>
</dbReference>
<dbReference type="HOGENOM" id="CLU_029848_0_0_2"/>
<dbReference type="OrthoDB" id="372247at2157"/>
<dbReference type="UniPathway" id="UPA00075">
    <property type="reaction ID" value="UER00335"/>
</dbReference>
<dbReference type="Proteomes" id="UP000000590">
    <property type="component" value="Chromosome"/>
</dbReference>
<dbReference type="GO" id="GO:0005737">
    <property type="term" value="C:cytoplasm"/>
    <property type="evidence" value="ECO:0007669"/>
    <property type="project" value="UniProtKB-SubCell"/>
</dbReference>
<dbReference type="GO" id="GO:0004019">
    <property type="term" value="F:adenylosuccinate synthase activity"/>
    <property type="evidence" value="ECO:0007669"/>
    <property type="project" value="UniProtKB-UniRule"/>
</dbReference>
<dbReference type="GO" id="GO:0005525">
    <property type="term" value="F:GTP binding"/>
    <property type="evidence" value="ECO:0007669"/>
    <property type="project" value="UniProtKB-UniRule"/>
</dbReference>
<dbReference type="GO" id="GO:0000287">
    <property type="term" value="F:magnesium ion binding"/>
    <property type="evidence" value="ECO:0007669"/>
    <property type="project" value="UniProtKB-UniRule"/>
</dbReference>
<dbReference type="GO" id="GO:0044208">
    <property type="term" value="P:'de novo' AMP biosynthetic process"/>
    <property type="evidence" value="ECO:0007669"/>
    <property type="project" value="UniProtKB-UniRule"/>
</dbReference>
<dbReference type="GO" id="GO:0046040">
    <property type="term" value="P:IMP metabolic process"/>
    <property type="evidence" value="ECO:0007669"/>
    <property type="project" value="TreeGrafter"/>
</dbReference>
<dbReference type="CDD" id="cd03108">
    <property type="entry name" value="AdSS"/>
    <property type="match status" value="1"/>
</dbReference>
<dbReference type="Gene3D" id="3.40.440.10">
    <property type="entry name" value="Adenylosuccinate Synthetase, subunit A, domain 1"/>
    <property type="match status" value="2"/>
</dbReference>
<dbReference type="Gene3D" id="3.90.170.10">
    <property type="entry name" value="Adenylosuccinate Synthetase, subunit A, domain 3"/>
    <property type="match status" value="2"/>
</dbReference>
<dbReference type="HAMAP" id="MF_00011">
    <property type="entry name" value="Adenylosucc_synth"/>
    <property type="match status" value="1"/>
</dbReference>
<dbReference type="InterPro" id="IPR018220">
    <property type="entry name" value="Adenylosuccin_syn_GTP-bd"/>
</dbReference>
<dbReference type="InterPro" id="IPR042109">
    <property type="entry name" value="Adenylosuccinate_synth_dom1"/>
</dbReference>
<dbReference type="InterPro" id="IPR042111">
    <property type="entry name" value="Adenylosuccinate_synth_dom3"/>
</dbReference>
<dbReference type="InterPro" id="IPR001114">
    <property type="entry name" value="Adenylosuccinate_synthetase"/>
</dbReference>
<dbReference type="InterPro" id="IPR027417">
    <property type="entry name" value="P-loop_NTPase"/>
</dbReference>
<dbReference type="NCBIfam" id="NF003295">
    <property type="entry name" value="PRK04293.1"/>
    <property type="match status" value="1"/>
</dbReference>
<dbReference type="PANTHER" id="PTHR11846">
    <property type="entry name" value="ADENYLOSUCCINATE SYNTHETASE"/>
    <property type="match status" value="1"/>
</dbReference>
<dbReference type="PANTHER" id="PTHR11846:SF0">
    <property type="entry name" value="ADENYLOSUCCINATE SYNTHETASE"/>
    <property type="match status" value="1"/>
</dbReference>
<dbReference type="Pfam" id="PF00709">
    <property type="entry name" value="Adenylsucc_synt"/>
    <property type="match status" value="2"/>
</dbReference>
<dbReference type="SMART" id="SM00788">
    <property type="entry name" value="Adenylsucc_synt"/>
    <property type="match status" value="1"/>
</dbReference>
<dbReference type="SUPFAM" id="SSF52540">
    <property type="entry name" value="P-loop containing nucleoside triphosphate hydrolases"/>
    <property type="match status" value="1"/>
</dbReference>
<dbReference type="PROSITE" id="PS01266">
    <property type="entry name" value="ADENYLOSUCCIN_SYN_1"/>
    <property type="match status" value="1"/>
</dbReference>
<name>PURA_METMP</name>
<comment type="function">
    <text evidence="1">Plays an important role in the de novo pathway of purine nucleotide biosynthesis. Catalyzes the first committed step in the biosynthesis of AMP from IMP.</text>
</comment>
<comment type="catalytic activity">
    <reaction evidence="1">
        <text>IMP + L-aspartate + GTP = N(6)-(1,2-dicarboxyethyl)-AMP + GDP + phosphate + 2 H(+)</text>
        <dbReference type="Rhea" id="RHEA:15753"/>
        <dbReference type="ChEBI" id="CHEBI:15378"/>
        <dbReference type="ChEBI" id="CHEBI:29991"/>
        <dbReference type="ChEBI" id="CHEBI:37565"/>
        <dbReference type="ChEBI" id="CHEBI:43474"/>
        <dbReference type="ChEBI" id="CHEBI:57567"/>
        <dbReference type="ChEBI" id="CHEBI:58053"/>
        <dbReference type="ChEBI" id="CHEBI:58189"/>
        <dbReference type="EC" id="6.3.4.4"/>
    </reaction>
</comment>
<comment type="cofactor">
    <cofactor evidence="1">
        <name>Mg(2+)</name>
        <dbReference type="ChEBI" id="CHEBI:18420"/>
    </cofactor>
    <text evidence="1">Binds 1 Mg(2+) ion per subunit.</text>
</comment>
<comment type="pathway">
    <text evidence="1">Purine metabolism; AMP biosynthesis via de novo pathway; AMP from IMP: step 1/2.</text>
</comment>
<comment type="subunit">
    <text evidence="1">Homodimer.</text>
</comment>
<comment type="subcellular location">
    <subcellularLocation>
        <location evidence="1">Cytoplasm</location>
    </subcellularLocation>
</comment>
<comment type="similarity">
    <text evidence="1">Belongs to the adenylosuccinate synthetase family.</text>
</comment>
<proteinExistence type="inferred from homology"/>
<feature type="chain" id="PRO_0000095272" description="Adenylosuccinate synthetase">
    <location>
        <begin position="1"/>
        <end position="338"/>
    </location>
</feature>
<feature type="active site" description="Proton acceptor" evidence="1">
    <location>
        <position position="13"/>
    </location>
</feature>
<feature type="active site" description="Proton donor" evidence="1">
    <location>
        <position position="43"/>
    </location>
</feature>
<feature type="binding site" evidence="1">
    <location>
        <begin position="12"/>
        <end position="18"/>
    </location>
    <ligand>
        <name>GTP</name>
        <dbReference type="ChEBI" id="CHEBI:37565"/>
    </ligand>
</feature>
<feature type="binding site" description="in other chain" evidence="1">
    <location>
        <begin position="13"/>
        <end position="16"/>
    </location>
    <ligand>
        <name>IMP</name>
        <dbReference type="ChEBI" id="CHEBI:58053"/>
        <note>ligand shared between dimeric partners</note>
    </ligand>
</feature>
<feature type="binding site" evidence="1">
    <location>
        <position position="13"/>
    </location>
    <ligand>
        <name>Mg(2+)</name>
        <dbReference type="ChEBI" id="CHEBI:18420"/>
    </ligand>
</feature>
<feature type="binding site" description="in other chain" evidence="1">
    <location>
        <begin position="40"/>
        <end position="43"/>
    </location>
    <ligand>
        <name>IMP</name>
        <dbReference type="ChEBI" id="CHEBI:58053"/>
        <note>ligand shared between dimeric partners</note>
    </ligand>
</feature>
<feature type="binding site" evidence="1">
    <location>
        <begin position="42"/>
        <end position="44"/>
    </location>
    <ligand>
        <name>GTP</name>
        <dbReference type="ChEBI" id="CHEBI:37565"/>
    </ligand>
</feature>
<feature type="binding site" evidence="1">
    <location>
        <position position="42"/>
    </location>
    <ligand>
        <name>Mg(2+)</name>
        <dbReference type="ChEBI" id="CHEBI:18420"/>
    </ligand>
</feature>
<feature type="binding site" description="in other chain" evidence="1">
    <location>
        <position position="127"/>
    </location>
    <ligand>
        <name>IMP</name>
        <dbReference type="ChEBI" id="CHEBI:58053"/>
        <note>ligand shared between dimeric partners</note>
    </ligand>
</feature>
<feature type="binding site" evidence="1">
    <location>
        <position position="141"/>
    </location>
    <ligand>
        <name>IMP</name>
        <dbReference type="ChEBI" id="CHEBI:58053"/>
        <note>ligand shared between dimeric partners</note>
    </ligand>
</feature>
<feature type="binding site" description="in other chain" evidence="1">
    <location>
        <position position="179"/>
    </location>
    <ligand>
        <name>IMP</name>
        <dbReference type="ChEBI" id="CHEBI:58053"/>
        <note>ligand shared between dimeric partners</note>
    </ligand>
</feature>
<feature type="binding site" description="in other chain" evidence="1">
    <location>
        <position position="194"/>
    </location>
    <ligand>
        <name>IMP</name>
        <dbReference type="ChEBI" id="CHEBI:58053"/>
        <note>ligand shared between dimeric partners</note>
    </ligand>
</feature>
<feature type="binding site" evidence="1">
    <location>
        <begin position="252"/>
        <end position="258"/>
    </location>
    <ligand>
        <name>substrate</name>
    </ligand>
</feature>
<feature type="binding site" description="in other chain" evidence="1">
    <location>
        <position position="256"/>
    </location>
    <ligand>
        <name>IMP</name>
        <dbReference type="ChEBI" id="CHEBI:58053"/>
        <note>ligand shared between dimeric partners</note>
    </ligand>
</feature>
<feature type="binding site" evidence="1">
    <location>
        <position position="258"/>
    </location>
    <ligand>
        <name>GTP</name>
        <dbReference type="ChEBI" id="CHEBI:37565"/>
    </ligand>
</feature>
<feature type="binding site" evidence="1">
    <location>
        <begin position="284"/>
        <end position="286"/>
    </location>
    <ligand>
        <name>GTP</name>
        <dbReference type="ChEBI" id="CHEBI:37565"/>
    </ligand>
</feature>
<feature type="binding site" evidence="1">
    <location>
        <begin position="324"/>
        <end position="326"/>
    </location>
    <ligand>
        <name>GTP</name>
        <dbReference type="ChEBI" id="CHEBI:37565"/>
    </ligand>
</feature>
<evidence type="ECO:0000255" key="1">
    <source>
        <dbReference type="HAMAP-Rule" id="MF_00011"/>
    </source>
</evidence>
<sequence length="338" mass="36573">MTCTIVVGGQWGDEGKGKIISYLCKKDNPSIIARGGVGPNAGHTVEVDGEKYGIRMVPTGFPNVNAKLAVGAGVLTDPEVLIKEIKMLEKFNVGERILVDYRCGIIEEVHKELDKSNEHLSKEIGSTGTGCGPANVDRAMRTLKQGKDVESISKYLGDVSEAVNEALESGDNVLIEGTQGSLLSLFYGSYPYVTSKDTNAASFAADVGIGPTKIDEVVAVFKSYPTRVGEGPFPTEMSLQEAENLGVVEYGTVTGRRRRVGYFDHELAKKVCRLNGATQIAITCLDKYDSDCYGITDYEKLSEKGKAFIKEVEEKVGVKVTLISTGPKLEQTIDVRNE</sequence>
<accession>Q6LXC0</accession>
<keyword id="KW-0963">Cytoplasm</keyword>
<keyword id="KW-0342">GTP-binding</keyword>
<keyword id="KW-0436">Ligase</keyword>
<keyword id="KW-0460">Magnesium</keyword>
<keyword id="KW-0479">Metal-binding</keyword>
<keyword id="KW-0547">Nucleotide-binding</keyword>
<keyword id="KW-0658">Purine biosynthesis</keyword>
<keyword id="KW-1185">Reference proteome</keyword>